<keyword id="KW-0066">ATP synthesis</keyword>
<keyword id="KW-0067">ATP-binding</keyword>
<keyword id="KW-0997">Cell inner membrane</keyword>
<keyword id="KW-1003">Cell membrane</keyword>
<keyword id="KW-0139">CF(1)</keyword>
<keyword id="KW-0375">Hydrogen ion transport</keyword>
<keyword id="KW-0406">Ion transport</keyword>
<keyword id="KW-0472">Membrane</keyword>
<keyword id="KW-0547">Nucleotide-binding</keyword>
<keyword id="KW-1278">Translocase</keyword>
<keyword id="KW-0813">Transport</keyword>
<feature type="chain" id="PRO_1000143560" description="ATP synthase subunit beta">
    <location>
        <begin position="1"/>
        <end position="467"/>
    </location>
</feature>
<feature type="binding site" evidence="1">
    <location>
        <begin position="150"/>
        <end position="157"/>
    </location>
    <ligand>
        <name>ATP</name>
        <dbReference type="ChEBI" id="CHEBI:30616"/>
    </ligand>
</feature>
<comment type="function">
    <text evidence="1">Produces ATP from ADP in the presence of a proton gradient across the membrane. The catalytic sites are hosted primarily by the beta subunits.</text>
</comment>
<comment type="catalytic activity">
    <reaction evidence="1">
        <text>ATP + H2O + 4 H(+)(in) = ADP + phosphate + 5 H(+)(out)</text>
        <dbReference type="Rhea" id="RHEA:57720"/>
        <dbReference type="ChEBI" id="CHEBI:15377"/>
        <dbReference type="ChEBI" id="CHEBI:15378"/>
        <dbReference type="ChEBI" id="CHEBI:30616"/>
        <dbReference type="ChEBI" id="CHEBI:43474"/>
        <dbReference type="ChEBI" id="CHEBI:456216"/>
        <dbReference type="EC" id="7.1.2.2"/>
    </reaction>
</comment>
<comment type="subunit">
    <text evidence="1">F-type ATPases have 2 components, CF(1) - the catalytic core - and CF(0) - the membrane proton channel. CF(1) has five subunits: alpha(3), beta(3), gamma(1), delta(1), epsilon(1). CF(0) has three main subunits: a(1), b(2) and c(9-12). The alpha and beta chains form an alternating ring which encloses part of the gamma chain. CF(1) is attached to CF(0) by a central stalk formed by the gamma and epsilon chains, while a peripheral stalk is formed by the delta and b chains.</text>
</comment>
<comment type="subcellular location">
    <subcellularLocation>
        <location evidence="1">Cell inner membrane</location>
        <topology evidence="1">Peripheral membrane protein</topology>
    </subcellularLocation>
</comment>
<comment type="similarity">
    <text evidence="1">Belongs to the ATPase alpha/beta chains family.</text>
</comment>
<name>ATPB_ALIFM</name>
<accession>B5FCZ1</accession>
<dbReference type="EC" id="7.1.2.2" evidence="1"/>
<dbReference type="EMBL" id="CP001139">
    <property type="protein sequence ID" value="ACH65096.1"/>
    <property type="molecule type" value="Genomic_DNA"/>
</dbReference>
<dbReference type="RefSeq" id="WP_005421586.1">
    <property type="nucleotide sequence ID" value="NC_011184.1"/>
</dbReference>
<dbReference type="SMR" id="B5FCZ1"/>
<dbReference type="KEGG" id="vfm:VFMJ11_2699"/>
<dbReference type="HOGENOM" id="CLU_022398_0_2_6"/>
<dbReference type="Proteomes" id="UP000001857">
    <property type="component" value="Chromosome I"/>
</dbReference>
<dbReference type="GO" id="GO:0005886">
    <property type="term" value="C:plasma membrane"/>
    <property type="evidence" value="ECO:0007669"/>
    <property type="project" value="UniProtKB-SubCell"/>
</dbReference>
<dbReference type="GO" id="GO:0045259">
    <property type="term" value="C:proton-transporting ATP synthase complex"/>
    <property type="evidence" value="ECO:0007669"/>
    <property type="project" value="UniProtKB-KW"/>
</dbReference>
<dbReference type="GO" id="GO:0005524">
    <property type="term" value="F:ATP binding"/>
    <property type="evidence" value="ECO:0007669"/>
    <property type="project" value="UniProtKB-UniRule"/>
</dbReference>
<dbReference type="GO" id="GO:0016887">
    <property type="term" value="F:ATP hydrolysis activity"/>
    <property type="evidence" value="ECO:0007669"/>
    <property type="project" value="InterPro"/>
</dbReference>
<dbReference type="GO" id="GO:0046933">
    <property type="term" value="F:proton-transporting ATP synthase activity, rotational mechanism"/>
    <property type="evidence" value="ECO:0007669"/>
    <property type="project" value="UniProtKB-UniRule"/>
</dbReference>
<dbReference type="CDD" id="cd18110">
    <property type="entry name" value="ATP-synt_F1_beta_C"/>
    <property type="match status" value="1"/>
</dbReference>
<dbReference type="CDD" id="cd18115">
    <property type="entry name" value="ATP-synt_F1_beta_N"/>
    <property type="match status" value="1"/>
</dbReference>
<dbReference type="CDD" id="cd01133">
    <property type="entry name" value="F1-ATPase_beta_CD"/>
    <property type="match status" value="1"/>
</dbReference>
<dbReference type="FunFam" id="1.10.1140.10:FF:000001">
    <property type="entry name" value="ATP synthase subunit beta"/>
    <property type="match status" value="1"/>
</dbReference>
<dbReference type="FunFam" id="2.40.10.170:FF:000003">
    <property type="entry name" value="ATP synthase subunit beta"/>
    <property type="match status" value="1"/>
</dbReference>
<dbReference type="FunFam" id="3.40.50.300:FF:000004">
    <property type="entry name" value="ATP synthase subunit beta"/>
    <property type="match status" value="1"/>
</dbReference>
<dbReference type="Gene3D" id="2.40.10.170">
    <property type="match status" value="1"/>
</dbReference>
<dbReference type="Gene3D" id="1.10.1140.10">
    <property type="entry name" value="Bovine Mitochondrial F1-atpase, Atp Synthase Beta Chain, Chain D, domain 3"/>
    <property type="match status" value="1"/>
</dbReference>
<dbReference type="Gene3D" id="3.40.50.300">
    <property type="entry name" value="P-loop containing nucleotide triphosphate hydrolases"/>
    <property type="match status" value="1"/>
</dbReference>
<dbReference type="HAMAP" id="MF_01347">
    <property type="entry name" value="ATP_synth_beta_bact"/>
    <property type="match status" value="1"/>
</dbReference>
<dbReference type="InterPro" id="IPR003593">
    <property type="entry name" value="AAA+_ATPase"/>
</dbReference>
<dbReference type="InterPro" id="IPR055190">
    <property type="entry name" value="ATP-synt_VA_C"/>
</dbReference>
<dbReference type="InterPro" id="IPR005722">
    <property type="entry name" value="ATP_synth_F1_bsu"/>
</dbReference>
<dbReference type="InterPro" id="IPR020003">
    <property type="entry name" value="ATPase_a/bsu_AS"/>
</dbReference>
<dbReference type="InterPro" id="IPR050053">
    <property type="entry name" value="ATPase_alpha/beta_chains"/>
</dbReference>
<dbReference type="InterPro" id="IPR004100">
    <property type="entry name" value="ATPase_F1/V1/A1_a/bsu_N"/>
</dbReference>
<dbReference type="InterPro" id="IPR036121">
    <property type="entry name" value="ATPase_F1/V1/A1_a/bsu_N_sf"/>
</dbReference>
<dbReference type="InterPro" id="IPR000194">
    <property type="entry name" value="ATPase_F1/V1/A1_a/bsu_nucl-bd"/>
</dbReference>
<dbReference type="InterPro" id="IPR024034">
    <property type="entry name" value="ATPase_F1/V1_b/a_C"/>
</dbReference>
<dbReference type="InterPro" id="IPR027417">
    <property type="entry name" value="P-loop_NTPase"/>
</dbReference>
<dbReference type="NCBIfam" id="TIGR01039">
    <property type="entry name" value="atpD"/>
    <property type="match status" value="1"/>
</dbReference>
<dbReference type="PANTHER" id="PTHR15184">
    <property type="entry name" value="ATP SYNTHASE"/>
    <property type="match status" value="1"/>
</dbReference>
<dbReference type="PANTHER" id="PTHR15184:SF71">
    <property type="entry name" value="ATP SYNTHASE SUBUNIT BETA, MITOCHONDRIAL"/>
    <property type="match status" value="1"/>
</dbReference>
<dbReference type="Pfam" id="PF00006">
    <property type="entry name" value="ATP-synt_ab"/>
    <property type="match status" value="1"/>
</dbReference>
<dbReference type="Pfam" id="PF02874">
    <property type="entry name" value="ATP-synt_ab_N"/>
    <property type="match status" value="1"/>
</dbReference>
<dbReference type="Pfam" id="PF22919">
    <property type="entry name" value="ATP-synt_VA_C"/>
    <property type="match status" value="1"/>
</dbReference>
<dbReference type="SMART" id="SM00382">
    <property type="entry name" value="AAA"/>
    <property type="match status" value="1"/>
</dbReference>
<dbReference type="SUPFAM" id="SSF47917">
    <property type="entry name" value="C-terminal domain of alpha and beta subunits of F1 ATP synthase"/>
    <property type="match status" value="1"/>
</dbReference>
<dbReference type="SUPFAM" id="SSF50615">
    <property type="entry name" value="N-terminal domain of alpha and beta subunits of F1 ATP synthase"/>
    <property type="match status" value="1"/>
</dbReference>
<dbReference type="SUPFAM" id="SSF52540">
    <property type="entry name" value="P-loop containing nucleoside triphosphate hydrolases"/>
    <property type="match status" value="1"/>
</dbReference>
<dbReference type="PROSITE" id="PS00152">
    <property type="entry name" value="ATPASE_ALPHA_BETA"/>
    <property type="match status" value="1"/>
</dbReference>
<reference key="1">
    <citation type="submission" date="2008-08" db="EMBL/GenBank/DDBJ databases">
        <title>Complete sequence of Vibrio fischeri strain MJ11.</title>
        <authorList>
            <person name="Mandel M.J."/>
            <person name="Stabb E.V."/>
            <person name="Ruby E.G."/>
            <person name="Ferriera S."/>
            <person name="Johnson J."/>
            <person name="Kravitz S."/>
            <person name="Beeson K."/>
            <person name="Sutton G."/>
            <person name="Rogers Y.-H."/>
            <person name="Friedman R."/>
            <person name="Frazier M."/>
            <person name="Venter J.C."/>
        </authorList>
    </citation>
    <scope>NUCLEOTIDE SEQUENCE [LARGE SCALE GENOMIC DNA]</scope>
    <source>
        <strain>MJ11</strain>
    </source>
</reference>
<gene>
    <name evidence="1" type="primary">atpD</name>
    <name type="ordered locus">VFMJ11_2699</name>
</gene>
<proteinExistence type="inferred from homology"/>
<organism>
    <name type="scientific">Aliivibrio fischeri (strain MJ11)</name>
    <name type="common">Vibrio fischeri</name>
    <dbReference type="NCBI Taxonomy" id="388396"/>
    <lineage>
        <taxon>Bacteria</taxon>
        <taxon>Pseudomonadati</taxon>
        <taxon>Pseudomonadota</taxon>
        <taxon>Gammaproteobacteria</taxon>
        <taxon>Vibrionales</taxon>
        <taxon>Vibrionaceae</taxon>
        <taxon>Aliivibrio</taxon>
    </lineage>
</organism>
<evidence type="ECO:0000255" key="1">
    <source>
        <dbReference type="HAMAP-Rule" id="MF_01347"/>
    </source>
</evidence>
<sequence length="467" mass="50735">MTTGKIVQIIGAVVDVEFPQGEVPRVYDALNVVDAQERLVLEVQQQIGGGVVRCIVMGSSDGLRRGLTVENTGAPISVPVGTKTLGRIMNVLGDAIDECGDIDAEEHYAIHREAPSYEEQSNSTELLETGVKVIDLVCPFAKGGKIGLFGGAGVGKTVNMMELINNIALQHSGLSVFAGVGERTREGNDFYFEMQEAGVVNIEKPEESKVAMVYGQMNEPPGNRLRVALTGLTMAERFRDEGRDVLLFVDNIYRYTLAGTEVSALLGRMPSAVGYQPTLAEEMGVLQERITSTKQGSITSVQAVYVPADDLTDPSPATTFAHLDATVVLNRNIAAMGLYPAIDPLDSTSRQLDPLVVGQEHYDVARGVQSTLQRYKELKDIIAILGMDELSEEDKQVVSRARKIEKFLTQPYHVAEVFTGDPGIYVPLKDTLAGFKGLLAGDYDDVPEQAFMYCGKIEDALEKAKKL</sequence>
<protein>
    <recommendedName>
        <fullName evidence="1">ATP synthase subunit beta</fullName>
        <ecNumber evidence="1">7.1.2.2</ecNumber>
    </recommendedName>
    <alternativeName>
        <fullName evidence="1">ATP synthase F1 sector subunit beta</fullName>
    </alternativeName>
    <alternativeName>
        <fullName evidence="1">F-ATPase subunit beta</fullName>
    </alternativeName>
</protein>